<accession>A1KI08</accession>
<proteinExistence type="inferred from homology"/>
<sequence length="224" mass="23033">MDGTPGHDDMPGQPAPSRGESLWAHAEGSISEDVILAGARERATDIGAGAVTPAVGALLCLLAKLSGGKAVAEVGTGAGVSGLWLLSGMRDDGVLTTIDIEPEHLRLARQAFAEAGIGPSRTRLISGRAQEVLTRLADASYDLVFIDADPIDQPDYVAEGVRLLRSGGVIVVHRAALGGRAGDPGARDAEVIAVREAARLIAEDERLTPALVPLGDGVLAAVRD</sequence>
<gene>
    <name type="ordered locus">BCG_1280c</name>
</gene>
<name>Y1280_MYCBP</name>
<organism>
    <name type="scientific">Mycobacterium bovis (strain BCG / Pasteur 1173P2)</name>
    <dbReference type="NCBI Taxonomy" id="410289"/>
    <lineage>
        <taxon>Bacteria</taxon>
        <taxon>Bacillati</taxon>
        <taxon>Actinomycetota</taxon>
        <taxon>Actinomycetes</taxon>
        <taxon>Mycobacteriales</taxon>
        <taxon>Mycobacteriaceae</taxon>
        <taxon>Mycobacterium</taxon>
        <taxon>Mycobacterium tuberculosis complex</taxon>
    </lineage>
</organism>
<feature type="chain" id="PRO_0000380094" description="Putative O-methyltransferase BCG_1280c">
    <location>
        <begin position="1"/>
        <end position="224"/>
    </location>
</feature>
<feature type="region of interest" description="Disordered" evidence="3">
    <location>
        <begin position="1"/>
        <end position="21"/>
    </location>
</feature>
<feature type="compositionally biased region" description="Basic and acidic residues" evidence="3">
    <location>
        <begin position="1"/>
        <end position="10"/>
    </location>
</feature>
<feature type="binding site" evidence="2">
    <location>
        <position position="51"/>
    </location>
    <ligand>
        <name>S-adenosyl-L-methionine</name>
        <dbReference type="ChEBI" id="CHEBI:59789"/>
    </ligand>
</feature>
<feature type="binding site" evidence="2">
    <location>
        <position position="73"/>
    </location>
    <ligand>
        <name>S-adenosyl-L-methionine</name>
        <dbReference type="ChEBI" id="CHEBI:59789"/>
    </ligand>
</feature>
<feature type="binding site" evidence="2">
    <location>
        <begin position="75"/>
        <end position="76"/>
    </location>
    <ligand>
        <name>S-adenosyl-L-methionine</name>
        <dbReference type="ChEBI" id="CHEBI:59789"/>
    </ligand>
</feature>
<feature type="binding site" evidence="2">
    <location>
        <position position="81"/>
    </location>
    <ligand>
        <name>S-adenosyl-L-methionine</name>
        <dbReference type="ChEBI" id="CHEBI:59789"/>
    </ligand>
</feature>
<feature type="binding site" evidence="2">
    <location>
        <position position="99"/>
    </location>
    <ligand>
        <name>S-adenosyl-L-methionine</name>
        <dbReference type="ChEBI" id="CHEBI:59789"/>
    </ligand>
</feature>
<feature type="binding site" evidence="2">
    <location>
        <position position="100"/>
    </location>
    <ligand>
        <name>S-adenosyl-L-methionine</name>
        <dbReference type="ChEBI" id="CHEBI:59789"/>
    </ligand>
</feature>
<feature type="binding site" evidence="1">
    <location>
        <position position="147"/>
    </location>
    <ligand>
        <name>substrate</name>
    </ligand>
</feature>
<feature type="binding site" evidence="2">
    <location>
        <position position="149"/>
    </location>
    <ligand>
        <name>S-adenosyl-L-methionine</name>
        <dbReference type="ChEBI" id="CHEBI:59789"/>
    </ligand>
</feature>
<comment type="similarity">
    <text evidence="2">Belongs to the class I-like SAM-binding methyltransferase superfamily. Cation-dependent O-methyltransferase family.</text>
</comment>
<comment type="sequence caution" evidence="4">
    <conflict type="erroneous initiation">
        <sequence resource="EMBL-CDS" id="CAL71267"/>
    </conflict>
    <text>Truncated N-terminus.</text>
</comment>
<keyword id="KW-0489">Methyltransferase</keyword>
<keyword id="KW-0949">S-adenosyl-L-methionine</keyword>
<keyword id="KW-0808">Transferase</keyword>
<dbReference type="EC" id="2.1.1.-"/>
<dbReference type="EMBL" id="AM408590">
    <property type="protein sequence ID" value="CAL71267.1"/>
    <property type="status" value="ALT_INIT"/>
    <property type="molecule type" value="Genomic_DNA"/>
</dbReference>
<dbReference type="RefSeq" id="WP_003911448.1">
    <property type="nucleotide sequence ID" value="NC_008769.1"/>
</dbReference>
<dbReference type="SMR" id="A1KI08"/>
<dbReference type="KEGG" id="mbb:BCG_1280c"/>
<dbReference type="HOGENOM" id="CLU_067676_2_0_11"/>
<dbReference type="Proteomes" id="UP000001472">
    <property type="component" value="Chromosome"/>
</dbReference>
<dbReference type="GO" id="GO:0008171">
    <property type="term" value="F:O-methyltransferase activity"/>
    <property type="evidence" value="ECO:0007669"/>
    <property type="project" value="InterPro"/>
</dbReference>
<dbReference type="GO" id="GO:0008757">
    <property type="term" value="F:S-adenosylmethionine-dependent methyltransferase activity"/>
    <property type="evidence" value="ECO:0007669"/>
    <property type="project" value="TreeGrafter"/>
</dbReference>
<dbReference type="GO" id="GO:0032259">
    <property type="term" value="P:methylation"/>
    <property type="evidence" value="ECO:0007669"/>
    <property type="project" value="UniProtKB-KW"/>
</dbReference>
<dbReference type="CDD" id="cd02440">
    <property type="entry name" value="AdoMet_MTases"/>
    <property type="match status" value="1"/>
</dbReference>
<dbReference type="FunFam" id="3.40.50.150:FF:000374">
    <property type="entry name" value="Putative methyltransferase"/>
    <property type="match status" value="1"/>
</dbReference>
<dbReference type="Gene3D" id="3.40.50.150">
    <property type="entry name" value="Vaccinia Virus protein VP39"/>
    <property type="match status" value="1"/>
</dbReference>
<dbReference type="InterPro" id="IPR050362">
    <property type="entry name" value="Cation-dep_OMT"/>
</dbReference>
<dbReference type="InterPro" id="IPR029063">
    <property type="entry name" value="SAM-dependent_MTases_sf"/>
</dbReference>
<dbReference type="InterPro" id="IPR002935">
    <property type="entry name" value="SAM_O-MeTrfase"/>
</dbReference>
<dbReference type="PANTHER" id="PTHR10509:SF85">
    <property type="entry name" value="O-METHYLTRANSFERASE RV1220C-RELATED"/>
    <property type="match status" value="1"/>
</dbReference>
<dbReference type="PANTHER" id="PTHR10509">
    <property type="entry name" value="O-METHYLTRANSFERASE-RELATED"/>
    <property type="match status" value="1"/>
</dbReference>
<dbReference type="Pfam" id="PF01596">
    <property type="entry name" value="Methyltransf_3"/>
    <property type="match status" value="1"/>
</dbReference>
<dbReference type="SUPFAM" id="SSF53335">
    <property type="entry name" value="S-adenosyl-L-methionine-dependent methyltransferases"/>
    <property type="match status" value="1"/>
</dbReference>
<dbReference type="PROSITE" id="PS51682">
    <property type="entry name" value="SAM_OMT_I"/>
    <property type="match status" value="1"/>
</dbReference>
<evidence type="ECO:0000250" key="1"/>
<evidence type="ECO:0000255" key="2">
    <source>
        <dbReference type="PROSITE-ProRule" id="PRU01019"/>
    </source>
</evidence>
<evidence type="ECO:0000256" key="3">
    <source>
        <dbReference type="SAM" id="MobiDB-lite"/>
    </source>
</evidence>
<evidence type="ECO:0000305" key="4"/>
<protein>
    <recommendedName>
        <fullName>Putative O-methyltransferase BCG_1280c</fullName>
        <ecNumber>2.1.1.-</ecNumber>
    </recommendedName>
</protein>
<reference key="1">
    <citation type="journal article" date="2007" name="Proc. Natl. Acad. Sci. U.S.A.">
        <title>Genome plasticity of BCG and impact on vaccine efficacy.</title>
        <authorList>
            <person name="Brosch R."/>
            <person name="Gordon S.V."/>
            <person name="Garnier T."/>
            <person name="Eiglmeier K."/>
            <person name="Frigui W."/>
            <person name="Valenti P."/>
            <person name="Dos Santos S."/>
            <person name="Duthoy S."/>
            <person name="Lacroix C."/>
            <person name="Garcia-Pelayo C."/>
            <person name="Inwald J.K."/>
            <person name="Golby P."/>
            <person name="Garcia J.N."/>
            <person name="Hewinson R.G."/>
            <person name="Behr M.A."/>
            <person name="Quail M.A."/>
            <person name="Churcher C."/>
            <person name="Barrell B.G."/>
            <person name="Parkhill J."/>
            <person name="Cole S.T."/>
        </authorList>
    </citation>
    <scope>NUCLEOTIDE SEQUENCE [LARGE SCALE GENOMIC DNA]</scope>
    <source>
        <strain>BCG / Pasteur 1173P2</strain>
    </source>
</reference>